<sequence length="198" mass="20861">MAKILVLYYSMYGHIETMAHAVAEGAKKVDGAEVIIKRVPETMPPEIFAKAGGKTQNAPVATPQELADYDAIIFGTPTRFGNMSGQMRTFLDQTGGLWASGALYGKLGSVFSSTGTGGGQEQTITSTWTTLAHHGMVIVPIGYAAQELFDVSHVRGGTPYGATTIAGGDGSRQPSQEELSIARYQGEYVAGLAVKLNG</sequence>
<reference key="1">
    <citation type="submission" date="2007-11" db="EMBL/GenBank/DDBJ databases">
        <authorList>
            <consortium name="The Salmonella enterica serovar Paratyphi B Genome Sequencing Project"/>
            <person name="McClelland M."/>
            <person name="Sanderson E.K."/>
            <person name="Porwollik S."/>
            <person name="Spieth J."/>
            <person name="Clifton W.S."/>
            <person name="Fulton R."/>
            <person name="Cordes M."/>
            <person name="Wollam A."/>
            <person name="Shah N."/>
            <person name="Pepin K."/>
            <person name="Bhonagiri V."/>
            <person name="Nash W."/>
            <person name="Johnson M."/>
            <person name="Thiruvilangam P."/>
            <person name="Wilson R."/>
        </authorList>
    </citation>
    <scope>NUCLEOTIDE SEQUENCE [LARGE SCALE GENOMIC DNA]</scope>
    <source>
        <strain>ATCC BAA-1250 / SPB7</strain>
    </source>
</reference>
<name>NQOR_SALPB</name>
<accession>A9N6R4</accession>
<dbReference type="EC" id="1.6.5.2" evidence="1"/>
<dbReference type="EMBL" id="CP000886">
    <property type="protein sequence ID" value="ABX67811.1"/>
    <property type="molecule type" value="Genomic_DNA"/>
</dbReference>
<dbReference type="SMR" id="A9N6R4"/>
<dbReference type="CAZy" id="AA6">
    <property type="family name" value="Auxiliary Activities 6"/>
</dbReference>
<dbReference type="KEGG" id="spq:SPAB_02430"/>
<dbReference type="PATRIC" id="fig|1016998.12.peg.2299"/>
<dbReference type="HOGENOM" id="CLU_051402_0_2_6"/>
<dbReference type="BioCyc" id="SENT1016998:SPAB_RS09865-MONOMER"/>
<dbReference type="Proteomes" id="UP000008556">
    <property type="component" value="Chromosome"/>
</dbReference>
<dbReference type="GO" id="GO:0016020">
    <property type="term" value="C:membrane"/>
    <property type="evidence" value="ECO:0007669"/>
    <property type="project" value="TreeGrafter"/>
</dbReference>
<dbReference type="GO" id="GO:0050660">
    <property type="term" value="F:flavin adenine dinucleotide binding"/>
    <property type="evidence" value="ECO:0007669"/>
    <property type="project" value="UniProtKB-UniRule"/>
</dbReference>
<dbReference type="GO" id="GO:0010181">
    <property type="term" value="F:FMN binding"/>
    <property type="evidence" value="ECO:0007669"/>
    <property type="project" value="InterPro"/>
</dbReference>
<dbReference type="GO" id="GO:0051287">
    <property type="term" value="F:NAD binding"/>
    <property type="evidence" value="ECO:0007669"/>
    <property type="project" value="UniProtKB-UniRule"/>
</dbReference>
<dbReference type="GO" id="GO:0050136">
    <property type="term" value="F:NADH:ubiquinone reductase (non-electrogenic) activity"/>
    <property type="evidence" value="ECO:0007669"/>
    <property type="project" value="RHEA"/>
</dbReference>
<dbReference type="GO" id="GO:0050661">
    <property type="term" value="F:NADP binding"/>
    <property type="evidence" value="ECO:0007669"/>
    <property type="project" value="UniProtKB-UniRule"/>
</dbReference>
<dbReference type="GO" id="GO:0008753">
    <property type="term" value="F:NADPH dehydrogenase (quinone) activity"/>
    <property type="evidence" value="ECO:0007669"/>
    <property type="project" value="RHEA"/>
</dbReference>
<dbReference type="FunFam" id="3.40.50.360:FF:000004">
    <property type="entry name" value="NAD(P)H dehydrogenase (quinone)"/>
    <property type="match status" value="1"/>
</dbReference>
<dbReference type="Gene3D" id="3.40.50.360">
    <property type="match status" value="1"/>
</dbReference>
<dbReference type="HAMAP" id="MF_01017">
    <property type="entry name" value="NQOR"/>
    <property type="match status" value="1"/>
</dbReference>
<dbReference type="InterPro" id="IPR008254">
    <property type="entry name" value="Flavodoxin/NO_synth"/>
</dbReference>
<dbReference type="InterPro" id="IPR029039">
    <property type="entry name" value="Flavoprotein-like_sf"/>
</dbReference>
<dbReference type="InterPro" id="IPR010089">
    <property type="entry name" value="Flavoprotein_WrbA-like"/>
</dbReference>
<dbReference type="InterPro" id="IPR005025">
    <property type="entry name" value="FMN_Rdtase-like_dom"/>
</dbReference>
<dbReference type="InterPro" id="IPR037513">
    <property type="entry name" value="NQO"/>
</dbReference>
<dbReference type="NCBIfam" id="TIGR01755">
    <property type="entry name" value="flav_wrbA"/>
    <property type="match status" value="1"/>
</dbReference>
<dbReference type="NCBIfam" id="NF002999">
    <property type="entry name" value="PRK03767.1"/>
    <property type="match status" value="1"/>
</dbReference>
<dbReference type="PANTHER" id="PTHR30546">
    <property type="entry name" value="FLAVODOXIN-RELATED PROTEIN WRBA-RELATED"/>
    <property type="match status" value="1"/>
</dbReference>
<dbReference type="PANTHER" id="PTHR30546:SF23">
    <property type="entry name" value="FLAVOPROTEIN-LIKE PROTEIN YCP4-RELATED"/>
    <property type="match status" value="1"/>
</dbReference>
<dbReference type="Pfam" id="PF03358">
    <property type="entry name" value="FMN_red"/>
    <property type="match status" value="1"/>
</dbReference>
<dbReference type="SUPFAM" id="SSF52218">
    <property type="entry name" value="Flavoproteins"/>
    <property type="match status" value="1"/>
</dbReference>
<dbReference type="PROSITE" id="PS50902">
    <property type="entry name" value="FLAVODOXIN_LIKE"/>
    <property type="match status" value="1"/>
</dbReference>
<feature type="chain" id="PRO_1000084146" description="NAD(P)H dehydrogenase (quinone)">
    <location>
        <begin position="1"/>
        <end position="198"/>
    </location>
</feature>
<feature type="domain" description="Flavodoxin-like" evidence="1">
    <location>
        <begin position="4"/>
        <end position="189"/>
    </location>
</feature>
<feature type="binding site" evidence="1">
    <location>
        <begin position="10"/>
        <end position="15"/>
    </location>
    <ligand>
        <name>FMN</name>
        <dbReference type="ChEBI" id="CHEBI:58210"/>
    </ligand>
</feature>
<feature type="binding site" evidence="1">
    <location>
        <position position="12"/>
    </location>
    <ligand>
        <name>NAD(+)</name>
        <dbReference type="ChEBI" id="CHEBI:57540"/>
    </ligand>
</feature>
<feature type="binding site" evidence="1">
    <location>
        <begin position="78"/>
        <end position="80"/>
    </location>
    <ligand>
        <name>FMN</name>
        <dbReference type="ChEBI" id="CHEBI:58210"/>
    </ligand>
</feature>
<feature type="binding site" evidence="1">
    <location>
        <position position="98"/>
    </location>
    <ligand>
        <name>substrate</name>
    </ligand>
</feature>
<feature type="binding site" evidence="1">
    <location>
        <begin position="113"/>
        <end position="118"/>
    </location>
    <ligand>
        <name>FMN</name>
        <dbReference type="ChEBI" id="CHEBI:58210"/>
    </ligand>
</feature>
<feature type="binding site" evidence="1">
    <location>
        <position position="133"/>
    </location>
    <ligand>
        <name>FMN</name>
        <dbReference type="ChEBI" id="CHEBI:58210"/>
    </ligand>
</feature>
<proteinExistence type="inferred from homology"/>
<keyword id="KW-0285">Flavoprotein</keyword>
<keyword id="KW-0288">FMN</keyword>
<keyword id="KW-0520">NAD</keyword>
<keyword id="KW-0521">NADP</keyword>
<keyword id="KW-0547">Nucleotide-binding</keyword>
<keyword id="KW-0560">Oxidoreductase</keyword>
<protein>
    <recommendedName>
        <fullName evidence="1">NAD(P)H dehydrogenase (quinone)</fullName>
        <ecNumber evidence="1">1.6.5.2</ecNumber>
    </recommendedName>
    <alternativeName>
        <fullName>Flavoprotein WrbA</fullName>
    </alternativeName>
    <alternativeName>
        <fullName evidence="1">NAD(P)H:quinone oxidoreductase</fullName>
        <shortName evidence="1">NQO</shortName>
    </alternativeName>
</protein>
<organism>
    <name type="scientific">Salmonella paratyphi B (strain ATCC BAA-1250 / SPB7)</name>
    <dbReference type="NCBI Taxonomy" id="1016998"/>
    <lineage>
        <taxon>Bacteria</taxon>
        <taxon>Pseudomonadati</taxon>
        <taxon>Pseudomonadota</taxon>
        <taxon>Gammaproteobacteria</taxon>
        <taxon>Enterobacterales</taxon>
        <taxon>Enterobacteriaceae</taxon>
        <taxon>Salmonella</taxon>
    </lineage>
</organism>
<evidence type="ECO:0000255" key="1">
    <source>
        <dbReference type="HAMAP-Rule" id="MF_01017"/>
    </source>
</evidence>
<comment type="catalytic activity">
    <reaction evidence="1">
        <text>a quinone + NADH + H(+) = a quinol + NAD(+)</text>
        <dbReference type="Rhea" id="RHEA:46160"/>
        <dbReference type="ChEBI" id="CHEBI:15378"/>
        <dbReference type="ChEBI" id="CHEBI:24646"/>
        <dbReference type="ChEBI" id="CHEBI:57540"/>
        <dbReference type="ChEBI" id="CHEBI:57945"/>
        <dbReference type="ChEBI" id="CHEBI:132124"/>
        <dbReference type="EC" id="1.6.5.2"/>
    </reaction>
</comment>
<comment type="catalytic activity">
    <reaction evidence="1">
        <text>a quinone + NADPH + H(+) = a quinol + NADP(+)</text>
        <dbReference type="Rhea" id="RHEA:46164"/>
        <dbReference type="ChEBI" id="CHEBI:15378"/>
        <dbReference type="ChEBI" id="CHEBI:24646"/>
        <dbReference type="ChEBI" id="CHEBI:57783"/>
        <dbReference type="ChEBI" id="CHEBI:58349"/>
        <dbReference type="ChEBI" id="CHEBI:132124"/>
        <dbReference type="EC" id="1.6.5.2"/>
    </reaction>
</comment>
<comment type="cofactor">
    <cofactor evidence="1">
        <name>FMN</name>
        <dbReference type="ChEBI" id="CHEBI:58210"/>
    </cofactor>
    <text evidence="1">Binds 1 FMN per monomer.</text>
</comment>
<comment type="similarity">
    <text evidence="1">Belongs to the WrbA family.</text>
</comment>
<gene>
    <name type="ordered locus">SPAB_02430</name>
</gene>